<protein>
    <recommendedName>
        <fullName>F-box protein COS111</fullName>
    </recommendedName>
</protein>
<accession>Q6FJL1</accession>
<dbReference type="EMBL" id="CR380959">
    <property type="protein sequence ID" value="CAG62559.1"/>
    <property type="molecule type" value="Genomic_DNA"/>
</dbReference>
<dbReference type="RefSeq" id="XP_449583.1">
    <property type="nucleotide sequence ID" value="XM_449583.1"/>
</dbReference>
<dbReference type="FunCoup" id="Q6FJL1">
    <property type="interactions" value="44"/>
</dbReference>
<dbReference type="EnsemblFungi" id="CAGL0M05445g-T">
    <property type="protein sequence ID" value="CAGL0M05445g-T-p1"/>
    <property type="gene ID" value="CAGL0M05445g"/>
</dbReference>
<dbReference type="KEGG" id="cgr:2891630"/>
<dbReference type="CGD" id="CAL0136983">
    <property type="gene designation" value="CAGL0M05445g"/>
</dbReference>
<dbReference type="VEuPathDB" id="FungiDB:CAGL0M05445g"/>
<dbReference type="eggNOG" id="ENOG502R67H">
    <property type="taxonomic scope" value="Eukaryota"/>
</dbReference>
<dbReference type="HOGENOM" id="CLU_017243_0_0_1"/>
<dbReference type="InParanoid" id="Q6FJL1"/>
<dbReference type="OMA" id="VWCRQYM"/>
<dbReference type="Proteomes" id="UP000002428">
    <property type="component" value="Chromosome M"/>
</dbReference>
<dbReference type="GO" id="GO:0007165">
    <property type="term" value="P:signal transduction"/>
    <property type="evidence" value="ECO:0007669"/>
    <property type="project" value="EnsemblFungi"/>
</dbReference>
<dbReference type="InterPro" id="IPR036047">
    <property type="entry name" value="F-box-like_dom_sf"/>
</dbReference>
<dbReference type="InterPro" id="IPR001810">
    <property type="entry name" value="F-box_dom"/>
</dbReference>
<dbReference type="Pfam" id="PF12937">
    <property type="entry name" value="F-box-like"/>
    <property type="match status" value="1"/>
</dbReference>
<dbReference type="SUPFAM" id="SSF81383">
    <property type="entry name" value="F-box domain"/>
    <property type="match status" value="1"/>
</dbReference>
<keyword id="KW-1185">Reference proteome</keyword>
<keyword id="KW-0833">Ubl conjugation pathway</keyword>
<sequence>MQSVNIVSTNYSRYGVSVYDRLYRKDKNVSAKHRPSSTGVYGHDASTVDHASRSNNNLNLTRSTSAISESDDVATISTNNSRRSVIKRKYKSLITASSKKLITKLYEHGSNSDSFSIFSHKTSQSHHPAQRLGTEEDLIINDLFKRKEISDLPDEVLRNILSNVKDDQRTLVNCLYVNKAFYNATKPTLYERPKFTSTYRVAQFVTSIRTNPQNGLYVRELDLSKLKNGSLNGKSTSNTGVVADSPDVDEYNPMRTRTGSVTSFTSVTSTANSNTALSITTNNKDVALAGWRDWRYRHDPLYSSPVLNSYNAKRTVSRAPSIKSSHSSSSLTLFPGLKSKESFAQLSEGKSSDNGNNGKRQRSNSSVSSITNSLMSSLYNGSHISLNTTLSGSDNNSSKTQSKGKSSSSPGNPNDSSGEQDSIISSSSQIDTNTFGMTSSKSTSSTSNWFRMKLHGNGTRKLRLRSNKAISSKKDEQQNEESAQTAQKIETPIIKRTEPFSTPHPYTNKFLLKYAQYKDLPLGYILHILDHCPYLYILDLSNLTLCTDFEIIEGRRYKGRKQRFGSSRALPVVQESVISTDVPNDLDVIYLTDSSKTYEYYDRLRNTNKHKRSSSSNNLWSIPNQGWSDAPAPIGSHKNDLRRTHSQTIGRSNVELRKLNASEIFEHIATNQKSAYNTHLRVYMKNVLWCTQDMVKSFVLENFDQQAENLGEDKSSEMFIHDMNFSFENSGLNRNFVWTCEGNLQEFIAMVVLDEVNRKDDLEIENLFNIKAERILTPTNGPERAPEVHYISNVFTVSYGFQSNKKREMKFRVTILKTDTPMYFSIKKLADDYTSVVIKLQTNKNVALHGSETADIITTDQGSVLPEDVPEDNNADDTNNGENTIAQPFSNDPKERIERITQEIVARLKDLRGSDLRRNIGENNYVRERFLL</sequence>
<reference key="1">
    <citation type="journal article" date="2004" name="Nature">
        <title>Genome evolution in yeasts.</title>
        <authorList>
            <person name="Dujon B."/>
            <person name="Sherman D."/>
            <person name="Fischer G."/>
            <person name="Durrens P."/>
            <person name="Casaregola S."/>
            <person name="Lafontaine I."/>
            <person name="de Montigny J."/>
            <person name="Marck C."/>
            <person name="Neuveglise C."/>
            <person name="Talla E."/>
            <person name="Goffard N."/>
            <person name="Frangeul L."/>
            <person name="Aigle M."/>
            <person name="Anthouard V."/>
            <person name="Babour A."/>
            <person name="Barbe V."/>
            <person name="Barnay S."/>
            <person name="Blanchin S."/>
            <person name="Beckerich J.-M."/>
            <person name="Beyne E."/>
            <person name="Bleykasten C."/>
            <person name="Boisrame A."/>
            <person name="Boyer J."/>
            <person name="Cattolico L."/>
            <person name="Confanioleri F."/>
            <person name="de Daruvar A."/>
            <person name="Despons L."/>
            <person name="Fabre E."/>
            <person name="Fairhead C."/>
            <person name="Ferry-Dumazet H."/>
            <person name="Groppi A."/>
            <person name="Hantraye F."/>
            <person name="Hennequin C."/>
            <person name="Jauniaux N."/>
            <person name="Joyet P."/>
            <person name="Kachouri R."/>
            <person name="Kerrest A."/>
            <person name="Koszul R."/>
            <person name="Lemaire M."/>
            <person name="Lesur I."/>
            <person name="Ma L."/>
            <person name="Muller H."/>
            <person name="Nicaud J.-M."/>
            <person name="Nikolski M."/>
            <person name="Oztas S."/>
            <person name="Ozier-Kalogeropoulos O."/>
            <person name="Pellenz S."/>
            <person name="Potier S."/>
            <person name="Richard G.-F."/>
            <person name="Straub M.-L."/>
            <person name="Suleau A."/>
            <person name="Swennen D."/>
            <person name="Tekaia F."/>
            <person name="Wesolowski-Louvel M."/>
            <person name="Westhof E."/>
            <person name="Wirth B."/>
            <person name="Zeniou-Meyer M."/>
            <person name="Zivanovic Y."/>
            <person name="Bolotin-Fukuhara M."/>
            <person name="Thierry A."/>
            <person name="Bouchier C."/>
            <person name="Caudron B."/>
            <person name="Scarpelli C."/>
            <person name="Gaillardin C."/>
            <person name="Weissenbach J."/>
            <person name="Wincker P."/>
            <person name="Souciet J.-L."/>
        </authorList>
    </citation>
    <scope>NUCLEOTIDE SEQUENCE [LARGE SCALE GENOMIC DNA]</scope>
    <source>
        <strain>ATCC 2001 / BCRC 20586 / JCM 3761 / NBRC 0622 / NRRL Y-65 / CBS 138</strain>
    </source>
</reference>
<gene>
    <name type="primary">COS111</name>
    <name type="ordered locus">CAGL0M05445g</name>
</gene>
<feature type="chain" id="PRO_0000279193" description="F-box protein COS111">
    <location>
        <begin position="1"/>
        <end position="932"/>
    </location>
</feature>
<feature type="domain" description="F-box">
    <location>
        <begin position="146"/>
        <end position="193"/>
    </location>
</feature>
<feature type="region of interest" description="Disordered" evidence="2">
    <location>
        <begin position="29"/>
        <end position="63"/>
    </location>
</feature>
<feature type="region of interest" description="Disordered" evidence="2">
    <location>
        <begin position="346"/>
        <end position="369"/>
    </location>
</feature>
<feature type="region of interest" description="Disordered" evidence="2">
    <location>
        <begin position="389"/>
        <end position="450"/>
    </location>
</feature>
<feature type="region of interest" description="Disordered" evidence="2">
    <location>
        <begin position="470"/>
        <end position="500"/>
    </location>
</feature>
<feature type="region of interest" description="Disordered" evidence="2">
    <location>
        <begin position="863"/>
        <end position="893"/>
    </location>
</feature>
<feature type="compositionally biased region" description="Low complexity" evidence="2">
    <location>
        <begin position="53"/>
        <end position="63"/>
    </location>
</feature>
<feature type="compositionally biased region" description="Polar residues" evidence="2">
    <location>
        <begin position="346"/>
        <end position="358"/>
    </location>
</feature>
<feature type="compositionally biased region" description="Low complexity" evidence="2">
    <location>
        <begin position="395"/>
        <end position="431"/>
    </location>
</feature>
<feature type="compositionally biased region" description="Low complexity" evidence="2">
    <location>
        <begin position="438"/>
        <end position="447"/>
    </location>
</feature>
<feature type="compositionally biased region" description="Polar residues" evidence="2">
    <location>
        <begin position="876"/>
        <end position="890"/>
    </location>
</feature>
<comment type="function">
    <text evidence="1">F-box protein probably involved in ubiquitin conjugation pathway.</text>
</comment>
<name>CS111_CANGA</name>
<evidence type="ECO:0000250" key="1"/>
<evidence type="ECO:0000256" key="2">
    <source>
        <dbReference type="SAM" id="MobiDB-lite"/>
    </source>
</evidence>
<organism>
    <name type="scientific">Candida glabrata (strain ATCC 2001 / BCRC 20586 / JCM 3761 / NBRC 0622 / NRRL Y-65 / CBS 138)</name>
    <name type="common">Yeast</name>
    <name type="synonym">Nakaseomyces glabratus</name>
    <dbReference type="NCBI Taxonomy" id="284593"/>
    <lineage>
        <taxon>Eukaryota</taxon>
        <taxon>Fungi</taxon>
        <taxon>Dikarya</taxon>
        <taxon>Ascomycota</taxon>
        <taxon>Saccharomycotina</taxon>
        <taxon>Saccharomycetes</taxon>
        <taxon>Saccharomycetales</taxon>
        <taxon>Saccharomycetaceae</taxon>
        <taxon>Nakaseomyces</taxon>
    </lineage>
</organism>
<proteinExistence type="inferred from homology"/>